<sequence length="834" mass="95948">MTYSNKPTGSSLRSSRNSTLEPQSLVHREESKRQEGPKGQNLRIGLASPEQIRNWAERILPNGEIVGRVLKPHTIHYQTHKPEKDGLFCERIFGPIKSGFCSCGKYKGTRDNDSPPFCEQCGVELTESRVRRHRMGYIQLSSPVTHVWYLKNRPSVISHLLEMPLKDVESLVYCGSFIIGPGTYSKFRLLGTLRIGTHERAYKRILTRKRLRTRKHFLQTKNISLASRSVTLEKSQEKVNDSLKLSQRIIIARKRLLRLAAKPILEPKLICNRFYVPWRIALELFLSKWYRDCESREIITGGYGIQRMLINLNLQNKLVSLQKNWERLVEQTEKMWFPVSGKYKNSDHSADIQREKRLIIRSSKIIRDLIQSKTQPEWMVLSVLPVLPPDLRPIVELREGQLITSDLNELYRKVLFRNEDLSIWLSYQGTLVLSGLLARLQRASLQRAVDALLANGMGSSTFRDYNKRAYKSFSALIKGKKGRFRENLLGKRVDYSGRSVIVVGPLLALHECGLPREMALELFQPFIIRELITRQLAPNLRAAKSMIQNKEPIIWKVLQVIVQNRLVLLNRAPTLHRLGIQAFQPVLVGERAILLHPLVCAGFNADFDGDQMAVHVPLSWEAQVEARILMWSPSNLLSPATGRAVAVPSQDMLLGLYVLTLEGSVGIYGSRQRSFVSSSLLFTKNHEIKESKEEDSQSKQDFIRSLDKKSKPIKNSKYSLYPKFIENKSSFHKFPIFYDYDDVIISIHQGHLNLFSFLWLRWEAKYPVISSRKGPIEYQFDSSGNSINIYDNSYIKKNRKGNSFSKYILTTAGRVLFNQQIQQSIQEHFSSLRK</sequence>
<gene>
    <name evidence="1" type="primary">rpoC1</name>
</gene>
<feature type="chain" id="PRO_0000225326" description="DNA-directed RNA polymerase subunit beta'">
    <location>
        <begin position="1"/>
        <end position="834"/>
    </location>
</feature>
<feature type="region of interest" description="Disordered" evidence="2">
    <location>
        <begin position="1"/>
        <end position="45"/>
    </location>
</feature>
<feature type="compositionally biased region" description="Polar residues" evidence="2">
    <location>
        <begin position="1"/>
        <end position="22"/>
    </location>
</feature>
<feature type="compositionally biased region" description="Basic and acidic residues" evidence="2">
    <location>
        <begin position="26"/>
        <end position="36"/>
    </location>
</feature>
<feature type="binding site" evidence="1">
    <location>
        <position position="101"/>
    </location>
    <ligand>
        <name>Zn(2+)</name>
        <dbReference type="ChEBI" id="CHEBI:29105"/>
    </ligand>
</feature>
<feature type="binding site" evidence="1">
    <location>
        <position position="103"/>
    </location>
    <ligand>
        <name>Zn(2+)</name>
        <dbReference type="ChEBI" id="CHEBI:29105"/>
    </ligand>
</feature>
<feature type="binding site" evidence="1">
    <location>
        <position position="118"/>
    </location>
    <ligand>
        <name>Zn(2+)</name>
        <dbReference type="ChEBI" id="CHEBI:29105"/>
    </ligand>
</feature>
<feature type="binding site" evidence="1">
    <location>
        <position position="121"/>
    </location>
    <ligand>
        <name>Zn(2+)</name>
        <dbReference type="ChEBI" id="CHEBI:29105"/>
    </ligand>
</feature>
<feature type="binding site" evidence="1">
    <location>
        <position position="606"/>
    </location>
    <ligand>
        <name>Mg(2+)</name>
        <dbReference type="ChEBI" id="CHEBI:18420"/>
    </ligand>
</feature>
<feature type="binding site" evidence="1">
    <location>
        <position position="608"/>
    </location>
    <ligand>
        <name>Mg(2+)</name>
        <dbReference type="ChEBI" id="CHEBI:18420"/>
    </ligand>
</feature>
<feature type="binding site" evidence="1">
    <location>
        <position position="610"/>
    </location>
    <ligand>
        <name>Mg(2+)</name>
        <dbReference type="ChEBI" id="CHEBI:18420"/>
    </ligand>
</feature>
<reference key="1">
    <citation type="journal article" date="2005" name="BMC Biol.">
        <title>The complete chloroplast DNA sequences of the charophycean green algae Staurastrum and Zygnema reveal that the chloroplast genome underwent extensive changes during the evolution of the Zygnematales.</title>
        <authorList>
            <person name="Turmel M."/>
            <person name="Otis C."/>
            <person name="Lemieux C."/>
        </authorList>
    </citation>
    <scope>NUCLEOTIDE SEQUENCE [LARGE SCALE GENOMIC DNA]</scope>
</reference>
<keyword id="KW-0150">Chloroplast</keyword>
<keyword id="KW-0240">DNA-directed RNA polymerase</keyword>
<keyword id="KW-0460">Magnesium</keyword>
<keyword id="KW-0479">Metal-binding</keyword>
<keyword id="KW-0548">Nucleotidyltransferase</keyword>
<keyword id="KW-0934">Plastid</keyword>
<keyword id="KW-0804">Transcription</keyword>
<keyword id="KW-0808">Transferase</keyword>
<keyword id="KW-0862">Zinc</keyword>
<protein>
    <recommendedName>
        <fullName evidence="1">DNA-directed RNA polymerase subunit beta'</fullName>
        <ecNumber evidence="1">2.7.7.6</ecNumber>
    </recommendedName>
    <alternativeName>
        <fullName evidence="1">PEP</fullName>
    </alternativeName>
    <alternativeName>
        <fullName evidence="1">Plastid-encoded RNA polymerase subunit beta'</fullName>
        <shortName evidence="1">RNA polymerase subunit beta'</shortName>
    </alternativeName>
</protein>
<comment type="function">
    <text evidence="1">DNA-dependent RNA polymerase catalyzes the transcription of DNA into RNA using the four ribonucleoside triphosphates as substrates.</text>
</comment>
<comment type="catalytic activity">
    <reaction evidence="1">
        <text>RNA(n) + a ribonucleoside 5'-triphosphate = RNA(n+1) + diphosphate</text>
        <dbReference type="Rhea" id="RHEA:21248"/>
        <dbReference type="Rhea" id="RHEA-COMP:14527"/>
        <dbReference type="Rhea" id="RHEA-COMP:17342"/>
        <dbReference type="ChEBI" id="CHEBI:33019"/>
        <dbReference type="ChEBI" id="CHEBI:61557"/>
        <dbReference type="ChEBI" id="CHEBI:140395"/>
        <dbReference type="EC" id="2.7.7.6"/>
    </reaction>
</comment>
<comment type="cofactor">
    <cofactor evidence="1">
        <name>Mg(2+)</name>
        <dbReference type="ChEBI" id="CHEBI:18420"/>
    </cofactor>
    <text evidence="1">Binds 1 Mg(2+) ion per subunit.</text>
</comment>
<comment type="cofactor">
    <cofactor evidence="1">
        <name>Zn(2+)</name>
        <dbReference type="ChEBI" id="CHEBI:29105"/>
    </cofactor>
    <text evidence="1">Binds 1 Zn(2+) ion per subunit.</text>
</comment>
<comment type="subunit">
    <text evidence="1">In plastids the minimal PEP RNA polymerase catalytic core is composed of four subunits: alpha, beta, beta', and beta''. When a (nuclear-encoded) sigma factor is associated with the core the holoenzyme is formed, which can initiate transcription.</text>
</comment>
<comment type="subcellular location">
    <subcellularLocation>
        <location evidence="1">Plastid</location>
        <location evidence="1">Chloroplast</location>
    </subcellularLocation>
</comment>
<comment type="similarity">
    <text evidence="1">Belongs to the RNA polymerase beta' chain family. RpoC1 subfamily.</text>
</comment>
<accession>Q32RY3</accession>
<evidence type="ECO:0000255" key="1">
    <source>
        <dbReference type="HAMAP-Rule" id="MF_01323"/>
    </source>
</evidence>
<evidence type="ECO:0000256" key="2">
    <source>
        <dbReference type="SAM" id="MobiDB-lite"/>
    </source>
</evidence>
<organism>
    <name type="scientific">Staurastrum punctulatum</name>
    <name type="common">Green alga</name>
    <name type="synonym">Cosmoastrum punctulatum</name>
    <dbReference type="NCBI Taxonomy" id="102822"/>
    <lineage>
        <taxon>Eukaryota</taxon>
        <taxon>Viridiplantae</taxon>
        <taxon>Streptophyta</taxon>
        <taxon>Zygnematophyceae</taxon>
        <taxon>Zygnematophycidae</taxon>
        <taxon>Desmidiales</taxon>
        <taxon>Desmidiaceae</taxon>
        <taxon>Staurastrum</taxon>
    </lineage>
</organism>
<geneLocation type="chloroplast"/>
<dbReference type="EC" id="2.7.7.6" evidence="1"/>
<dbReference type="EMBL" id="AY958085">
    <property type="protein sequence ID" value="AAX45748.1"/>
    <property type="molecule type" value="Genomic_DNA"/>
</dbReference>
<dbReference type="RefSeq" id="YP_636393.1">
    <property type="nucleotide sequence ID" value="NC_008116.1"/>
</dbReference>
<dbReference type="SMR" id="Q32RY3"/>
<dbReference type="GeneID" id="4108610"/>
<dbReference type="GO" id="GO:0009507">
    <property type="term" value="C:chloroplast"/>
    <property type="evidence" value="ECO:0007669"/>
    <property type="project" value="UniProtKB-SubCell"/>
</dbReference>
<dbReference type="GO" id="GO:0000428">
    <property type="term" value="C:DNA-directed RNA polymerase complex"/>
    <property type="evidence" value="ECO:0007669"/>
    <property type="project" value="UniProtKB-KW"/>
</dbReference>
<dbReference type="GO" id="GO:0005739">
    <property type="term" value="C:mitochondrion"/>
    <property type="evidence" value="ECO:0007669"/>
    <property type="project" value="GOC"/>
</dbReference>
<dbReference type="GO" id="GO:0003677">
    <property type="term" value="F:DNA binding"/>
    <property type="evidence" value="ECO:0007669"/>
    <property type="project" value="UniProtKB-UniRule"/>
</dbReference>
<dbReference type="GO" id="GO:0003899">
    <property type="term" value="F:DNA-directed RNA polymerase activity"/>
    <property type="evidence" value="ECO:0007669"/>
    <property type="project" value="UniProtKB-UniRule"/>
</dbReference>
<dbReference type="GO" id="GO:0000287">
    <property type="term" value="F:magnesium ion binding"/>
    <property type="evidence" value="ECO:0007669"/>
    <property type="project" value="UniProtKB-UniRule"/>
</dbReference>
<dbReference type="GO" id="GO:0008270">
    <property type="term" value="F:zinc ion binding"/>
    <property type="evidence" value="ECO:0007669"/>
    <property type="project" value="UniProtKB-UniRule"/>
</dbReference>
<dbReference type="GO" id="GO:0006351">
    <property type="term" value="P:DNA-templated transcription"/>
    <property type="evidence" value="ECO:0007669"/>
    <property type="project" value="UniProtKB-UniRule"/>
</dbReference>
<dbReference type="Gene3D" id="1.10.40.90">
    <property type="match status" value="1"/>
</dbReference>
<dbReference type="Gene3D" id="2.40.40.20">
    <property type="match status" value="1"/>
</dbReference>
<dbReference type="Gene3D" id="4.10.860.120">
    <property type="entry name" value="RNA polymerase II, clamp domain"/>
    <property type="match status" value="1"/>
</dbReference>
<dbReference type="Gene3D" id="1.10.274.100">
    <property type="entry name" value="RNA polymerase Rpb1, domain 3"/>
    <property type="match status" value="1"/>
</dbReference>
<dbReference type="HAMAP" id="MF_01323">
    <property type="entry name" value="RNApol_bact_RpoC1"/>
    <property type="match status" value="1"/>
</dbReference>
<dbReference type="InterPro" id="IPR045867">
    <property type="entry name" value="DNA-dir_RpoC_beta_prime"/>
</dbReference>
<dbReference type="InterPro" id="IPR000722">
    <property type="entry name" value="RNA_pol_asu"/>
</dbReference>
<dbReference type="InterPro" id="IPR006592">
    <property type="entry name" value="RNA_pol_N"/>
</dbReference>
<dbReference type="InterPro" id="IPR007080">
    <property type="entry name" value="RNA_pol_Rpb1_1"/>
</dbReference>
<dbReference type="InterPro" id="IPR042102">
    <property type="entry name" value="RNA_pol_Rpb1_3_sf"/>
</dbReference>
<dbReference type="InterPro" id="IPR044893">
    <property type="entry name" value="RNA_pol_Rpb1_clamp_domain"/>
</dbReference>
<dbReference type="InterPro" id="IPR034678">
    <property type="entry name" value="RNApol_RpoC1"/>
</dbReference>
<dbReference type="PANTHER" id="PTHR19376">
    <property type="entry name" value="DNA-DIRECTED RNA POLYMERASE"/>
    <property type="match status" value="1"/>
</dbReference>
<dbReference type="PANTHER" id="PTHR19376:SF54">
    <property type="entry name" value="DNA-DIRECTED RNA POLYMERASE SUBUNIT BETA"/>
    <property type="match status" value="1"/>
</dbReference>
<dbReference type="Pfam" id="PF04997">
    <property type="entry name" value="RNA_pol_Rpb1_1"/>
    <property type="match status" value="1"/>
</dbReference>
<dbReference type="Pfam" id="PF00623">
    <property type="entry name" value="RNA_pol_Rpb1_2"/>
    <property type="match status" value="2"/>
</dbReference>
<dbReference type="SMART" id="SM00663">
    <property type="entry name" value="RPOLA_N"/>
    <property type="match status" value="1"/>
</dbReference>
<dbReference type="SUPFAM" id="SSF64484">
    <property type="entry name" value="beta and beta-prime subunits of DNA dependent RNA-polymerase"/>
    <property type="match status" value="1"/>
</dbReference>
<proteinExistence type="inferred from homology"/>
<name>RPOC1_STAPU</name>